<keyword id="KW-0687">Ribonucleoprotein</keyword>
<keyword id="KW-0689">Ribosomal protein</keyword>
<keyword id="KW-0694">RNA-binding</keyword>
<keyword id="KW-0699">rRNA-binding</keyword>
<reference key="1">
    <citation type="journal article" date="2008" name="DNA Res.">
        <title>Comparative genome analysis of Lactobacillus reuteri and Lactobacillus fermentum reveal a genomic island for reuterin and cobalamin production.</title>
        <authorList>
            <person name="Morita H."/>
            <person name="Toh H."/>
            <person name="Fukuda S."/>
            <person name="Horikawa H."/>
            <person name="Oshima K."/>
            <person name="Suzuki T."/>
            <person name="Murakami M."/>
            <person name="Hisamatsu S."/>
            <person name="Kato Y."/>
            <person name="Takizawa T."/>
            <person name="Fukuoka H."/>
            <person name="Yoshimura T."/>
            <person name="Itoh K."/>
            <person name="O'Sullivan D.J."/>
            <person name="McKay L.L."/>
            <person name="Ohno H."/>
            <person name="Kikuchi J."/>
            <person name="Masaoka T."/>
            <person name="Hattori M."/>
        </authorList>
    </citation>
    <scope>NUCLEOTIDE SEQUENCE [LARGE SCALE GENOMIC DNA]</scope>
    <source>
        <strain>JCM 1112</strain>
    </source>
</reference>
<name>RS4_LIMRJ</name>
<protein>
    <recommendedName>
        <fullName evidence="1">Small ribosomal subunit protein uS4</fullName>
    </recommendedName>
    <alternativeName>
        <fullName evidence="2">30S ribosomal protein S4</fullName>
    </alternativeName>
</protein>
<proteinExistence type="inferred from homology"/>
<gene>
    <name evidence="1" type="primary">rpsD</name>
    <name type="ordered locus">LAR_0486</name>
</gene>
<comment type="function">
    <text evidence="1">One of the primary rRNA binding proteins, it binds directly to 16S rRNA where it nucleates assembly of the body of the 30S subunit.</text>
</comment>
<comment type="function">
    <text evidence="1">With S5 and S12 plays an important role in translational accuracy.</text>
</comment>
<comment type="subunit">
    <text evidence="1">Part of the 30S ribosomal subunit. Contacts protein S5. The interaction surface between S4 and S5 is involved in control of translational fidelity.</text>
</comment>
<comment type="similarity">
    <text evidence="1">Belongs to the universal ribosomal protein uS4 family.</text>
</comment>
<accession>B2G6C0</accession>
<feature type="chain" id="PRO_1000140750" description="Small ribosomal subunit protein uS4">
    <location>
        <begin position="1"/>
        <end position="201"/>
    </location>
</feature>
<feature type="domain" description="S4 RNA-binding" evidence="1">
    <location>
        <begin position="93"/>
        <end position="156"/>
    </location>
</feature>
<evidence type="ECO:0000255" key="1">
    <source>
        <dbReference type="HAMAP-Rule" id="MF_01306"/>
    </source>
</evidence>
<evidence type="ECO:0000305" key="2"/>
<organism>
    <name type="scientific">Limosilactobacillus reuteri subsp. reuteri (strain JCM 1112)</name>
    <name type="common">Lactobacillus reuteri</name>
    <dbReference type="NCBI Taxonomy" id="557433"/>
    <lineage>
        <taxon>Bacteria</taxon>
        <taxon>Bacillati</taxon>
        <taxon>Bacillota</taxon>
        <taxon>Bacilli</taxon>
        <taxon>Lactobacillales</taxon>
        <taxon>Lactobacillaceae</taxon>
        <taxon>Limosilactobacillus</taxon>
    </lineage>
</organism>
<sequence length="201" mass="22985">MSRYTGPSWRVSRRLGVSLSGTVKELARRAYAPGDHGRDRRGKLSEYGTQLREKQKLRFMYGMTERQFSNLFVRAGKIKEGTHGANFMALLERRLDNMVYRLGLATTRRQARQLVNHGHITVDGKRVDIPSYEVKVGQIIAVRDKSKNLDIIKNAVEAVVSRPSYVDFDADKLEGKLNRIPAREDMNADIDEALIVEFYNK</sequence>
<dbReference type="EMBL" id="AP007281">
    <property type="protein sequence ID" value="BAG25002.1"/>
    <property type="molecule type" value="Genomic_DNA"/>
</dbReference>
<dbReference type="RefSeq" id="WP_012390516.1">
    <property type="nucleotide sequence ID" value="NC_010609.1"/>
</dbReference>
<dbReference type="SMR" id="B2G6C0"/>
<dbReference type="KEGG" id="lrf:LAR_0486"/>
<dbReference type="HOGENOM" id="CLU_092403_0_1_9"/>
<dbReference type="GO" id="GO:0015935">
    <property type="term" value="C:small ribosomal subunit"/>
    <property type="evidence" value="ECO:0007669"/>
    <property type="project" value="InterPro"/>
</dbReference>
<dbReference type="GO" id="GO:0019843">
    <property type="term" value="F:rRNA binding"/>
    <property type="evidence" value="ECO:0007669"/>
    <property type="project" value="UniProtKB-UniRule"/>
</dbReference>
<dbReference type="GO" id="GO:0003735">
    <property type="term" value="F:structural constituent of ribosome"/>
    <property type="evidence" value="ECO:0007669"/>
    <property type="project" value="InterPro"/>
</dbReference>
<dbReference type="GO" id="GO:0042274">
    <property type="term" value="P:ribosomal small subunit biogenesis"/>
    <property type="evidence" value="ECO:0007669"/>
    <property type="project" value="TreeGrafter"/>
</dbReference>
<dbReference type="GO" id="GO:0006412">
    <property type="term" value="P:translation"/>
    <property type="evidence" value="ECO:0007669"/>
    <property type="project" value="UniProtKB-UniRule"/>
</dbReference>
<dbReference type="CDD" id="cd00165">
    <property type="entry name" value="S4"/>
    <property type="match status" value="1"/>
</dbReference>
<dbReference type="FunFam" id="3.10.290.10:FF:000001">
    <property type="entry name" value="30S ribosomal protein S4"/>
    <property type="match status" value="1"/>
</dbReference>
<dbReference type="Gene3D" id="1.10.1050.10">
    <property type="entry name" value="Ribosomal Protein S4 Delta 41, Chain A, domain 1"/>
    <property type="match status" value="1"/>
</dbReference>
<dbReference type="Gene3D" id="3.10.290.10">
    <property type="entry name" value="RNA-binding S4 domain"/>
    <property type="match status" value="1"/>
</dbReference>
<dbReference type="HAMAP" id="MF_01306_B">
    <property type="entry name" value="Ribosomal_uS4_B"/>
    <property type="match status" value="1"/>
</dbReference>
<dbReference type="InterPro" id="IPR022801">
    <property type="entry name" value="Ribosomal_uS4"/>
</dbReference>
<dbReference type="InterPro" id="IPR005709">
    <property type="entry name" value="Ribosomal_uS4_bac-type"/>
</dbReference>
<dbReference type="InterPro" id="IPR018079">
    <property type="entry name" value="Ribosomal_uS4_CS"/>
</dbReference>
<dbReference type="InterPro" id="IPR001912">
    <property type="entry name" value="Ribosomal_uS4_N"/>
</dbReference>
<dbReference type="InterPro" id="IPR002942">
    <property type="entry name" value="S4_RNA-bd"/>
</dbReference>
<dbReference type="InterPro" id="IPR036986">
    <property type="entry name" value="S4_RNA-bd_sf"/>
</dbReference>
<dbReference type="NCBIfam" id="NF003717">
    <property type="entry name" value="PRK05327.1"/>
    <property type="match status" value="1"/>
</dbReference>
<dbReference type="NCBIfam" id="TIGR01017">
    <property type="entry name" value="rpsD_bact"/>
    <property type="match status" value="1"/>
</dbReference>
<dbReference type="PANTHER" id="PTHR11831">
    <property type="entry name" value="30S 40S RIBOSOMAL PROTEIN"/>
    <property type="match status" value="1"/>
</dbReference>
<dbReference type="PANTHER" id="PTHR11831:SF4">
    <property type="entry name" value="SMALL RIBOSOMAL SUBUNIT PROTEIN US4M"/>
    <property type="match status" value="1"/>
</dbReference>
<dbReference type="Pfam" id="PF00163">
    <property type="entry name" value="Ribosomal_S4"/>
    <property type="match status" value="1"/>
</dbReference>
<dbReference type="Pfam" id="PF01479">
    <property type="entry name" value="S4"/>
    <property type="match status" value="1"/>
</dbReference>
<dbReference type="SMART" id="SM01390">
    <property type="entry name" value="Ribosomal_S4"/>
    <property type="match status" value="1"/>
</dbReference>
<dbReference type="SMART" id="SM00363">
    <property type="entry name" value="S4"/>
    <property type="match status" value="1"/>
</dbReference>
<dbReference type="SUPFAM" id="SSF55174">
    <property type="entry name" value="Alpha-L RNA-binding motif"/>
    <property type="match status" value="1"/>
</dbReference>
<dbReference type="PROSITE" id="PS00632">
    <property type="entry name" value="RIBOSOMAL_S4"/>
    <property type="match status" value="1"/>
</dbReference>
<dbReference type="PROSITE" id="PS50889">
    <property type="entry name" value="S4"/>
    <property type="match status" value="1"/>
</dbReference>